<keyword id="KW-1185">Reference proteome</keyword>
<keyword id="KW-0687">Ribonucleoprotein</keyword>
<keyword id="KW-0689">Ribosomal protein</keyword>
<keyword id="KW-0694">RNA-binding</keyword>
<keyword id="KW-0699">rRNA-binding</keyword>
<organism>
    <name type="scientific">Tolumonas auensis (strain DSM 9187 / NBRC 110442 / TA 4)</name>
    <dbReference type="NCBI Taxonomy" id="595494"/>
    <lineage>
        <taxon>Bacteria</taxon>
        <taxon>Pseudomonadati</taxon>
        <taxon>Pseudomonadota</taxon>
        <taxon>Gammaproteobacteria</taxon>
        <taxon>Aeromonadales</taxon>
        <taxon>Aeromonadaceae</taxon>
        <taxon>Tolumonas</taxon>
    </lineage>
</organism>
<proteinExistence type="inferred from homology"/>
<evidence type="ECO:0000255" key="1">
    <source>
        <dbReference type="HAMAP-Rule" id="MF_01328"/>
    </source>
</evidence>
<evidence type="ECO:0000256" key="2">
    <source>
        <dbReference type="SAM" id="MobiDB-lite"/>
    </source>
</evidence>
<evidence type="ECO:0000305" key="3"/>
<protein>
    <recommendedName>
        <fullName evidence="1">Large ribosomal subunit protein uL4</fullName>
    </recommendedName>
    <alternativeName>
        <fullName evidence="3">50S ribosomal protein L4</fullName>
    </alternativeName>
</protein>
<reference key="1">
    <citation type="submission" date="2009-05" db="EMBL/GenBank/DDBJ databases">
        <title>Complete sequence of Tolumonas auensis DSM 9187.</title>
        <authorList>
            <consortium name="US DOE Joint Genome Institute"/>
            <person name="Lucas S."/>
            <person name="Copeland A."/>
            <person name="Lapidus A."/>
            <person name="Glavina del Rio T."/>
            <person name="Tice H."/>
            <person name="Bruce D."/>
            <person name="Goodwin L."/>
            <person name="Pitluck S."/>
            <person name="Chertkov O."/>
            <person name="Brettin T."/>
            <person name="Detter J.C."/>
            <person name="Han C."/>
            <person name="Larimer F."/>
            <person name="Land M."/>
            <person name="Hauser L."/>
            <person name="Kyrpides N."/>
            <person name="Mikhailova N."/>
            <person name="Spring S."/>
            <person name="Beller H."/>
        </authorList>
    </citation>
    <scope>NUCLEOTIDE SEQUENCE [LARGE SCALE GENOMIC DNA]</scope>
    <source>
        <strain>DSM 9187 / NBRC 110442 / TA 4</strain>
    </source>
</reference>
<dbReference type="EMBL" id="CP001616">
    <property type="protein sequence ID" value="ACQ91730.1"/>
    <property type="molecule type" value="Genomic_DNA"/>
</dbReference>
<dbReference type="RefSeq" id="WP_012728329.1">
    <property type="nucleotide sequence ID" value="NC_012691.1"/>
</dbReference>
<dbReference type="SMR" id="C4L7T1"/>
<dbReference type="STRING" id="595494.Tola_0100"/>
<dbReference type="KEGG" id="tau:Tola_0100"/>
<dbReference type="eggNOG" id="COG0088">
    <property type="taxonomic scope" value="Bacteria"/>
</dbReference>
<dbReference type="HOGENOM" id="CLU_041575_5_2_6"/>
<dbReference type="OrthoDB" id="9803201at2"/>
<dbReference type="Proteomes" id="UP000009073">
    <property type="component" value="Chromosome"/>
</dbReference>
<dbReference type="GO" id="GO:1990904">
    <property type="term" value="C:ribonucleoprotein complex"/>
    <property type="evidence" value="ECO:0007669"/>
    <property type="project" value="UniProtKB-KW"/>
</dbReference>
<dbReference type="GO" id="GO:0005840">
    <property type="term" value="C:ribosome"/>
    <property type="evidence" value="ECO:0007669"/>
    <property type="project" value="UniProtKB-KW"/>
</dbReference>
<dbReference type="GO" id="GO:0019843">
    <property type="term" value="F:rRNA binding"/>
    <property type="evidence" value="ECO:0007669"/>
    <property type="project" value="UniProtKB-UniRule"/>
</dbReference>
<dbReference type="GO" id="GO:0003735">
    <property type="term" value="F:structural constituent of ribosome"/>
    <property type="evidence" value="ECO:0007669"/>
    <property type="project" value="InterPro"/>
</dbReference>
<dbReference type="GO" id="GO:0006412">
    <property type="term" value="P:translation"/>
    <property type="evidence" value="ECO:0007669"/>
    <property type="project" value="UniProtKB-UniRule"/>
</dbReference>
<dbReference type="FunFam" id="3.40.1370.10:FF:000001">
    <property type="entry name" value="50S ribosomal protein L4"/>
    <property type="match status" value="1"/>
</dbReference>
<dbReference type="Gene3D" id="3.40.1370.10">
    <property type="match status" value="1"/>
</dbReference>
<dbReference type="HAMAP" id="MF_01328_B">
    <property type="entry name" value="Ribosomal_uL4_B"/>
    <property type="match status" value="1"/>
</dbReference>
<dbReference type="InterPro" id="IPR002136">
    <property type="entry name" value="Ribosomal_uL4"/>
</dbReference>
<dbReference type="InterPro" id="IPR013005">
    <property type="entry name" value="Ribosomal_uL4-like"/>
</dbReference>
<dbReference type="InterPro" id="IPR023574">
    <property type="entry name" value="Ribosomal_uL4_dom_sf"/>
</dbReference>
<dbReference type="NCBIfam" id="TIGR03953">
    <property type="entry name" value="rplD_bact"/>
    <property type="match status" value="1"/>
</dbReference>
<dbReference type="PANTHER" id="PTHR10746">
    <property type="entry name" value="50S RIBOSOMAL PROTEIN L4"/>
    <property type="match status" value="1"/>
</dbReference>
<dbReference type="PANTHER" id="PTHR10746:SF6">
    <property type="entry name" value="LARGE RIBOSOMAL SUBUNIT PROTEIN UL4M"/>
    <property type="match status" value="1"/>
</dbReference>
<dbReference type="Pfam" id="PF00573">
    <property type="entry name" value="Ribosomal_L4"/>
    <property type="match status" value="1"/>
</dbReference>
<dbReference type="SUPFAM" id="SSF52166">
    <property type="entry name" value="Ribosomal protein L4"/>
    <property type="match status" value="1"/>
</dbReference>
<name>RL4_TOLAT</name>
<comment type="function">
    <text evidence="1">One of the primary rRNA binding proteins, this protein initially binds near the 5'-end of the 23S rRNA. It is important during the early stages of 50S assembly. It makes multiple contacts with different domains of the 23S rRNA in the assembled 50S subunit and ribosome.</text>
</comment>
<comment type="function">
    <text evidence="1">Forms part of the polypeptide exit tunnel.</text>
</comment>
<comment type="subunit">
    <text evidence="1">Part of the 50S ribosomal subunit.</text>
</comment>
<comment type="similarity">
    <text evidence="1">Belongs to the universal ribosomal protein uL4 family.</text>
</comment>
<accession>C4L7T1</accession>
<feature type="chain" id="PRO_1000214593" description="Large ribosomal subunit protein uL4">
    <location>
        <begin position="1"/>
        <end position="201"/>
    </location>
</feature>
<feature type="region of interest" description="Disordered" evidence="2">
    <location>
        <begin position="43"/>
        <end position="66"/>
    </location>
</feature>
<gene>
    <name evidence="1" type="primary">rplD</name>
    <name type="ordered locus">Tola_0100</name>
</gene>
<sequence>MELVLKDAQSALQVSETTFGREFNEALVHQVVVAYAAGARQGTRAQKTRSEVSGGGKKPWRQKGTGRARAGTIRSPIWRGGGVTFAAKPQDHSQKVNRKMYRGAIQSILSELVRQDRLVVVEKFGVDAPKTKELLTKLQALDLKDVLIVTPEVEENLFLAARNLYKVDVRDVTGIDPVSLIAFDKVLMTADAVKQIEEMLA</sequence>